<keyword id="KW-0027">Amidation</keyword>
<keyword id="KW-0903">Direct protein sequencing</keyword>
<keyword id="KW-0527">Neuropeptide</keyword>
<keyword id="KW-0964">Secreted</keyword>
<proteinExistence type="evidence at protein level"/>
<organism>
    <name type="scientific">Mytilus edulis</name>
    <name type="common">Blue mussel</name>
    <dbReference type="NCBI Taxonomy" id="6550"/>
    <lineage>
        <taxon>Eukaryota</taxon>
        <taxon>Metazoa</taxon>
        <taxon>Spiralia</taxon>
        <taxon>Lophotrochozoa</taxon>
        <taxon>Mollusca</taxon>
        <taxon>Bivalvia</taxon>
        <taxon>Autobranchia</taxon>
        <taxon>Pteriomorphia</taxon>
        <taxon>Mytilida</taxon>
        <taxon>Mytiloidea</taxon>
        <taxon>Mytilidae</taxon>
        <taxon>Mytilinae</taxon>
        <taxon>Mytilus</taxon>
    </lineage>
</organism>
<name>FARP_MYTED</name>
<protein>
    <recommendedName>
        <fullName>FMRFamide-like neuropeptide ALAGDHFFRF-amide</fullName>
    </recommendedName>
</protein>
<feature type="peptide" id="PRO_0000043696" description="FMRFamide-like neuropeptide ALAGDHFFRF-amide">
    <location>
        <begin position="1"/>
        <end position="10"/>
    </location>
</feature>
<feature type="modified residue" description="Phenylalanine amide" evidence="1">
    <location>
        <position position="10"/>
    </location>
</feature>
<sequence length="10" mass="1180">ALAGDHFFRF</sequence>
<dbReference type="PIR" id="A58365">
    <property type="entry name" value="A58365"/>
</dbReference>
<dbReference type="GO" id="GO:0005576">
    <property type="term" value="C:extracellular region"/>
    <property type="evidence" value="ECO:0007669"/>
    <property type="project" value="UniProtKB-SubCell"/>
</dbReference>
<dbReference type="GO" id="GO:0007218">
    <property type="term" value="P:neuropeptide signaling pathway"/>
    <property type="evidence" value="ECO:0007669"/>
    <property type="project" value="UniProtKB-KW"/>
</dbReference>
<comment type="subcellular location">
    <subcellularLocation>
        <location>Secreted</location>
    </subcellularLocation>
</comment>
<comment type="similarity">
    <text evidence="2">Belongs to the FARP (FMRFamide related peptide) family.</text>
</comment>
<evidence type="ECO:0000269" key="1">
    <source>
    </source>
</evidence>
<evidence type="ECO:0000305" key="2"/>
<accession>P42560</accession>
<reference key="1">
    <citation type="journal article" date="1992" name="Comp. Biochem. Physiol.">
        <title>Neuroactive peptides with an RFamide or Famide carboxyl terminal.</title>
        <authorList>
            <person name="Walker R.J."/>
        </authorList>
    </citation>
    <scope>PROTEIN SEQUENCE</scope>
    <scope>AMIDATION AT PHE-10</scope>
</reference>